<gene>
    <name evidence="1" type="primary">groES</name>
    <name evidence="1" type="synonym">groS</name>
    <name type="ordered locus">plu4135</name>
</gene>
<keyword id="KW-0143">Chaperone</keyword>
<keyword id="KW-0963">Cytoplasm</keyword>
<keyword id="KW-1185">Reference proteome</keyword>
<protein>
    <recommendedName>
        <fullName evidence="1">Co-chaperonin GroES</fullName>
    </recommendedName>
    <alternativeName>
        <fullName evidence="1">10 kDa chaperonin</fullName>
    </alternativeName>
    <alternativeName>
        <fullName evidence="1">Chaperonin-10</fullName>
        <shortName evidence="1">Cpn10</shortName>
    </alternativeName>
</protein>
<dbReference type="EMBL" id="BX571872">
    <property type="protein sequence ID" value="CAE16507.1"/>
    <property type="molecule type" value="Genomic_DNA"/>
</dbReference>
<dbReference type="RefSeq" id="WP_011148251.1">
    <property type="nucleotide sequence ID" value="NC_005126.1"/>
</dbReference>
<dbReference type="SMR" id="Q7MAZ6"/>
<dbReference type="STRING" id="243265.plu4135"/>
<dbReference type="GeneID" id="48850352"/>
<dbReference type="KEGG" id="plu:plu4135"/>
<dbReference type="eggNOG" id="COG0234">
    <property type="taxonomic scope" value="Bacteria"/>
</dbReference>
<dbReference type="HOGENOM" id="CLU_132825_1_1_6"/>
<dbReference type="OrthoDB" id="9806791at2"/>
<dbReference type="Proteomes" id="UP000002514">
    <property type="component" value="Chromosome"/>
</dbReference>
<dbReference type="GO" id="GO:0005737">
    <property type="term" value="C:cytoplasm"/>
    <property type="evidence" value="ECO:0007669"/>
    <property type="project" value="UniProtKB-SubCell"/>
</dbReference>
<dbReference type="GO" id="GO:0005524">
    <property type="term" value="F:ATP binding"/>
    <property type="evidence" value="ECO:0007669"/>
    <property type="project" value="InterPro"/>
</dbReference>
<dbReference type="GO" id="GO:0046872">
    <property type="term" value="F:metal ion binding"/>
    <property type="evidence" value="ECO:0007669"/>
    <property type="project" value="TreeGrafter"/>
</dbReference>
<dbReference type="GO" id="GO:0044183">
    <property type="term" value="F:protein folding chaperone"/>
    <property type="evidence" value="ECO:0007669"/>
    <property type="project" value="InterPro"/>
</dbReference>
<dbReference type="GO" id="GO:0051087">
    <property type="term" value="F:protein-folding chaperone binding"/>
    <property type="evidence" value="ECO:0007669"/>
    <property type="project" value="TreeGrafter"/>
</dbReference>
<dbReference type="GO" id="GO:0051082">
    <property type="term" value="F:unfolded protein binding"/>
    <property type="evidence" value="ECO:0007669"/>
    <property type="project" value="TreeGrafter"/>
</dbReference>
<dbReference type="GO" id="GO:0051085">
    <property type="term" value="P:chaperone cofactor-dependent protein refolding"/>
    <property type="evidence" value="ECO:0007669"/>
    <property type="project" value="TreeGrafter"/>
</dbReference>
<dbReference type="CDD" id="cd00320">
    <property type="entry name" value="cpn10"/>
    <property type="match status" value="1"/>
</dbReference>
<dbReference type="FunFam" id="2.30.33.40:FF:000001">
    <property type="entry name" value="10 kDa chaperonin"/>
    <property type="match status" value="1"/>
</dbReference>
<dbReference type="Gene3D" id="2.30.33.40">
    <property type="entry name" value="GroES chaperonin"/>
    <property type="match status" value="1"/>
</dbReference>
<dbReference type="HAMAP" id="MF_00580">
    <property type="entry name" value="CH10"/>
    <property type="match status" value="1"/>
</dbReference>
<dbReference type="InterPro" id="IPR020818">
    <property type="entry name" value="Chaperonin_GroES"/>
</dbReference>
<dbReference type="InterPro" id="IPR037124">
    <property type="entry name" value="Chaperonin_GroES_sf"/>
</dbReference>
<dbReference type="InterPro" id="IPR018369">
    <property type="entry name" value="Chaprnonin_Cpn10_CS"/>
</dbReference>
<dbReference type="InterPro" id="IPR011032">
    <property type="entry name" value="GroES-like_sf"/>
</dbReference>
<dbReference type="NCBIfam" id="NF001526">
    <property type="entry name" value="PRK00364.1-1"/>
    <property type="match status" value="1"/>
</dbReference>
<dbReference type="NCBIfam" id="NF001531">
    <property type="entry name" value="PRK00364.2-2"/>
    <property type="match status" value="1"/>
</dbReference>
<dbReference type="PANTHER" id="PTHR10772">
    <property type="entry name" value="10 KDA HEAT SHOCK PROTEIN"/>
    <property type="match status" value="1"/>
</dbReference>
<dbReference type="PANTHER" id="PTHR10772:SF58">
    <property type="entry name" value="CO-CHAPERONIN GROES"/>
    <property type="match status" value="1"/>
</dbReference>
<dbReference type="Pfam" id="PF00166">
    <property type="entry name" value="Cpn10"/>
    <property type="match status" value="1"/>
</dbReference>
<dbReference type="PRINTS" id="PR00297">
    <property type="entry name" value="CHAPERONIN10"/>
</dbReference>
<dbReference type="SMART" id="SM00883">
    <property type="entry name" value="Cpn10"/>
    <property type="match status" value="1"/>
</dbReference>
<dbReference type="SUPFAM" id="SSF50129">
    <property type="entry name" value="GroES-like"/>
    <property type="match status" value="1"/>
</dbReference>
<dbReference type="PROSITE" id="PS00681">
    <property type="entry name" value="CHAPERONINS_CPN10"/>
    <property type="match status" value="1"/>
</dbReference>
<accession>Q7MAZ6</accession>
<name>CH10_PHOLL</name>
<evidence type="ECO:0000255" key="1">
    <source>
        <dbReference type="HAMAP-Rule" id="MF_00580"/>
    </source>
</evidence>
<reference key="1">
    <citation type="journal article" date="2003" name="Nat. Biotechnol.">
        <title>The genome sequence of the entomopathogenic bacterium Photorhabdus luminescens.</title>
        <authorList>
            <person name="Duchaud E."/>
            <person name="Rusniok C."/>
            <person name="Frangeul L."/>
            <person name="Buchrieser C."/>
            <person name="Givaudan A."/>
            <person name="Taourit S."/>
            <person name="Bocs S."/>
            <person name="Boursaux-Eude C."/>
            <person name="Chandler M."/>
            <person name="Charles J.-F."/>
            <person name="Dassa E."/>
            <person name="Derose R."/>
            <person name="Derzelle S."/>
            <person name="Freyssinet G."/>
            <person name="Gaudriault S."/>
            <person name="Medigue C."/>
            <person name="Lanois A."/>
            <person name="Powell K."/>
            <person name="Siguier P."/>
            <person name="Vincent R."/>
            <person name="Wingate V."/>
            <person name="Zouine M."/>
            <person name="Glaser P."/>
            <person name="Boemare N."/>
            <person name="Danchin A."/>
            <person name="Kunst F."/>
        </authorList>
    </citation>
    <scope>NUCLEOTIDE SEQUENCE [LARGE SCALE GENOMIC DNA]</scope>
    <source>
        <strain>DSM 15139 / CIP 105565 / TT01</strain>
    </source>
</reference>
<feature type="chain" id="PRO_0000174800" description="Co-chaperonin GroES">
    <location>
        <begin position="1"/>
        <end position="97"/>
    </location>
</feature>
<sequence length="97" mass="10294">MNIRPLHDRVIVKRKEVESKSAGGIVLTGTAAGKSTRGEVLAVGNGRILESGDVKALCVKVGDIVIFNDGYGVKSEKIDNEEVLIMSESDILAIVEA</sequence>
<organism>
    <name type="scientific">Photorhabdus laumondii subsp. laumondii (strain DSM 15139 / CIP 105565 / TT01)</name>
    <name type="common">Photorhabdus luminescens subsp. laumondii</name>
    <dbReference type="NCBI Taxonomy" id="243265"/>
    <lineage>
        <taxon>Bacteria</taxon>
        <taxon>Pseudomonadati</taxon>
        <taxon>Pseudomonadota</taxon>
        <taxon>Gammaproteobacteria</taxon>
        <taxon>Enterobacterales</taxon>
        <taxon>Morganellaceae</taxon>
        <taxon>Photorhabdus</taxon>
    </lineage>
</organism>
<proteinExistence type="inferred from homology"/>
<comment type="function">
    <text evidence="1">Together with the chaperonin GroEL, plays an essential role in assisting protein folding. The GroEL-GroES system forms a nano-cage that allows encapsulation of the non-native substrate proteins and provides a physical environment optimized to promote and accelerate protein folding. GroES binds to the apical surface of the GroEL ring, thereby capping the opening of the GroEL channel.</text>
</comment>
<comment type="subunit">
    <text evidence="1">Heptamer of 7 subunits arranged in a ring. Interacts with the chaperonin GroEL.</text>
</comment>
<comment type="subcellular location">
    <subcellularLocation>
        <location evidence="1">Cytoplasm</location>
    </subcellularLocation>
</comment>
<comment type="similarity">
    <text evidence="1">Belongs to the GroES chaperonin family.</text>
</comment>